<organism>
    <name type="scientific">Streptococcus pyogenes serotype M49 (strain NZ131)</name>
    <dbReference type="NCBI Taxonomy" id="471876"/>
    <lineage>
        <taxon>Bacteria</taxon>
        <taxon>Bacillati</taxon>
        <taxon>Bacillota</taxon>
        <taxon>Bacilli</taxon>
        <taxon>Lactobacillales</taxon>
        <taxon>Streptococcaceae</taxon>
        <taxon>Streptococcus</taxon>
    </lineage>
</organism>
<reference key="1">
    <citation type="journal article" date="2008" name="J. Bacteriol.">
        <title>Genome sequence of a nephritogenic and highly transformable M49 strain of Streptococcus pyogenes.</title>
        <authorList>
            <person name="McShan W.M."/>
            <person name="Ferretti J.J."/>
            <person name="Karasawa T."/>
            <person name="Suvorov A.N."/>
            <person name="Lin S."/>
            <person name="Qin B."/>
            <person name="Jia H."/>
            <person name="Kenton S."/>
            <person name="Najar F."/>
            <person name="Wu H."/>
            <person name="Scott J."/>
            <person name="Roe B.A."/>
            <person name="Savic D.J."/>
        </authorList>
    </citation>
    <scope>NUCLEOTIDE SEQUENCE [LARGE SCALE GENOMIC DNA]</scope>
    <source>
        <strain>NZ131</strain>
    </source>
</reference>
<gene>
    <name evidence="1" type="primary">ung</name>
    <name type="ordered locus">Spy49_0717</name>
</gene>
<dbReference type="EC" id="3.2.2.27" evidence="1"/>
<dbReference type="EMBL" id="CP000829">
    <property type="protein sequence ID" value="ACI61032.1"/>
    <property type="molecule type" value="Genomic_DNA"/>
</dbReference>
<dbReference type="SMR" id="B5XL20"/>
<dbReference type="KEGG" id="soz:Spy49_0717"/>
<dbReference type="HOGENOM" id="CLU_032162_3_1_9"/>
<dbReference type="Proteomes" id="UP000001039">
    <property type="component" value="Chromosome"/>
</dbReference>
<dbReference type="GO" id="GO:0005737">
    <property type="term" value="C:cytoplasm"/>
    <property type="evidence" value="ECO:0007669"/>
    <property type="project" value="UniProtKB-SubCell"/>
</dbReference>
<dbReference type="GO" id="GO:0004844">
    <property type="term" value="F:uracil DNA N-glycosylase activity"/>
    <property type="evidence" value="ECO:0007669"/>
    <property type="project" value="UniProtKB-UniRule"/>
</dbReference>
<dbReference type="GO" id="GO:0097510">
    <property type="term" value="P:base-excision repair, AP site formation via deaminated base removal"/>
    <property type="evidence" value="ECO:0007669"/>
    <property type="project" value="TreeGrafter"/>
</dbReference>
<dbReference type="CDD" id="cd10027">
    <property type="entry name" value="UDG-F1-like"/>
    <property type="match status" value="1"/>
</dbReference>
<dbReference type="FunFam" id="3.40.470.10:FF:000008">
    <property type="entry name" value="Uracil-DNA glycosylase"/>
    <property type="match status" value="1"/>
</dbReference>
<dbReference type="Gene3D" id="3.40.470.10">
    <property type="entry name" value="Uracil-DNA glycosylase-like domain"/>
    <property type="match status" value="1"/>
</dbReference>
<dbReference type="HAMAP" id="MF_00148">
    <property type="entry name" value="UDG"/>
    <property type="match status" value="1"/>
</dbReference>
<dbReference type="InterPro" id="IPR002043">
    <property type="entry name" value="UDG_fam1"/>
</dbReference>
<dbReference type="InterPro" id="IPR018085">
    <property type="entry name" value="Ura-DNA_Glyclase_AS"/>
</dbReference>
<dbReference type="InterPro" id="IPR005122">
    <property type="entry name" value="Uracil-DNA_glycosylase-like"/>
</dbReference>
<dbReference type="InterPro" id="IPR036895">
    <property type="entry name" value="Uracil-DNA_glycosylase-like_sf"/>
</dbReference>
<dbReference type="NCBIfam" id="NF003588">
    <property type="entry name" value="PRK05254.1-1"/>
    <property type="match status" value="1"/>
</dbReference>
<dbReference type="NCBIfam" id="NF003589">
    <property type="entry name" value="PRK05254.1-2"/>
    <property type="match status" value="1"/>
</dbReference>
<dbReference type="NCBIfam" id="NF003592">
    <property type="entry name" value="PRK05254.1-5"/>
    <property type="match status" value="1"/>
</dbReference>
<dbReference type="NCBIfam" id="TIGR00628">
    <property type="entry name" value="ung"/>
    <property type="match status" value="1"/>
</dbReference>
<dbReference type="PANTHER" id="PTHR11264">
    <property type="entry name" value="URACIL-DNA GLYCOSYLASE"/>
    <property type="match status" value="1"/>
</dbReference>
<dbReference type="PANTHER" id="PTHR11264:SF0">
    <property type="entry name" value="URACIL-DNA GLYCOSYLASE"/>
    <property type="match status" value="1"/>
</dbReference>
<dbReference type="Pfam" id="PF03167">
    <property type="entry name" value="UDG"/>
    <property type="match status" value="1"/>
</dbReference>
<dbReference type="SMART" id="SM00986">
    <property type="entry name" value="UDG"/>
    <property type="match status" value="1"/>
</dbReference>
<dbReference type="SMART" id="SM00987">
    <property type="entry name" value="UreE_C"/>
    <property type="match status" value="1"/>
</dbReference>
<dbReference type="SUPFAM" id="SSF52141">
    <property type="entry name" value="Uracil-DNA glycosylase-like"/>
    <property type="match status" value="1"/>
</dbReference>
<dbReference type="PROSITE" id="PS00130">
    <property type="entry name" value="U_DNA_GLYCOSYLASE"/>
    <property type="match status" value="1"/>
</dbReference>
<feature type="chain" id="PRO_1000096613" description="Uracil-DNA glycosylase">
    <location>
        <begin position="1"/>
        <end position="217"/>
    </location>
</feature>
<feature type="active site" description="Proton acceptor" evidence="1">
    <location>
        <position position="62"/>
    </location>
</feature>
<accession>B5XL20</accession>
<evidence type="ECO:0000255" key="1">
    <source>
        <dbReference type="HAMAP-Rule" id="MF_00148"/>
    </source>
</evidence>
<keyword id="KW-0963">Cytoplasm</keyword>
<keyword id="KW-0227">DNA damage</keyword>
<keyword id="KW-0234">DNA repair</keyword>
<keyword id="KW-0378">Hydrolase</keyword>
<comment type="function">
    <text evidence="1">Excises uracil residues from the DNA which can arise as a result of misincorporation of dUMP residues by DNA polymerase or due to deamination of cytosine.</text>
</comment>
<comment type="catalytic activity">
    <reaction evidence="1">
        <text>Hydrolyzes single-stranded DNA or mismatched double-stranded DNA and polynucleotides, releasing free uracil.</text>
        <dbReference type="EC" id="3.2.2.27"/>
    </reaction>
</comment>
<comment type="subcellular location">
    <subcellularLocation>
        <location evidence="1">Cytoplasm</location>
    </subcellularLocation>
</comment>
<comment type="similarity">
    <text evidence="1">Belongs to the uracil-DNA glycosylase (UDG) superfamily. UNG family.</text>
</comment>
<protein>
    <recommendedName>
        <fullName evidence="1">Uracil-DNA glycosylase</fullName>
        <shortName evidence="1">UDG</shortName>
        <ecNumber evidence="1">3.2.2.27</ecNumber>
    </recommendedName>
</protein>
<proteinExistence type="inferred from homology"/>
<sequence>MAHSIWHEKIKSFLPEHYYGRINHFLDEAYASGLVYPPRENVFKALQVTPLEETKVLILGQDPYHGPKQAQGLSFSVPEEISAPPSLINILKELADDIGPRDHHDLSTWASQGVLLLNACLTVPAGQANGHAGLIWEPFTDAVIKVLNEKDSPVVFILWGAYARKKKAFITNPKHHIIESSHPSPLSSYRGFFGSKPFSRTNAILEKEGMTGVDWLK</sequence>
<name>UNG_STRPZ</name>